<feature type="transit peptide" description="Mitochondrion" evidence="2">
    <location>
        <begin position="1"/>
        <end position="48"/>
    </location>
</feature>
<feature type="chain" id="PRO_0000291987" description="Evolutionarily conserved signaling intermediate in Toll pathway, mitochondrial">
    <location>
        <begin position="49"/>
        <end position="435"/>
    </location>
</feature>
<feature type="region of interest" description="Disordered" evidence="3">
    <location>
        <begin position="401"/>
        <end position="435"/>
    </location>
</feature>
<feature type="cross-link" description="Glycyl lysine isopeptide (Lys-Gly) (interchain with G-Cter in ubiquitin)" evidence="1">
    <location>
        <position position="372"/>
    </location>
</feature>
<feature type="sequence conflict" description="In Ref. 1; AAF01219." evidence="8" ref="1">
    <original>L</original>
    <variation>S</variation>
    <location>
        <position position="75"/>
    </location>
</feature>
<name>ECSIT_MOUSE</name>
<accession>Q9QZH6</accession>
<accession>Q91V53</accession>
<sequence>MSWVQVNLLVRSLSRGWGGLCRPALSGTPFAQVSLQALRGLHCSAATHKDEPWLVPRPPEPQRKPIKVPAMHEDLFKPSGNRERDKASFLNAVRSFGAHNVRKRGHVDFIYLALRKMPEFGVERDLSVYNLLLDVFPKEVFRPRNVIQRIFVHYPRQQECGVAVLEQMERHGVMPSAETEFLLIQIFGRKSYPMLKFLRMKLWFTRFKNINPYPVPRDLPQDPLDLAKLGLRHMEPDLSAKVTVYQMSLPSDSTGMEDPTQPHIVGIQSPDQQAALARHNPSRPVFVEGPFPLWLRNKCVYYHILRADLPPPEEEKVEEIPEEWELYYPQKLDLEYSRSGWDDYEFDVDEVTEGPVFAMCMAGAHDQATLIKWIQGLQETNPTLAQIPVVFRLARSTGELLTTSRLEGQSPPHSPPKGPEEDDETIQAEQQQGQS</sequence>
<gene>
    <name evidence="9" type="primary">Ecsit</name>
    <name type="synonym">Sitpec</name>
</gene>
<dbReference type="EMBL" id="AF182510">
    <property type="protein sequence ID" value="AAF01219.1"/>
    <property type="molecule type" value="mRNA"/>
</dbReference>
<dbReference type="EMBL" id="BC004583">
    <property type="protein sequence ID" value="AAH04583.1"/>
    <property type="molecule type" value="mRNA"/>
</dbReference>
<dbReference type="EMBL" id="BC016424">
    <property type="protein sequence ID" value="AAH16424.1"/>
    <property type="molecule type" value="mRNA"/>
</dbReference>
<dbReference type="CCDS" id="CCDS22920.1"/>
<dbReference type="RefSeq" id="NP_001240826.1">
    <property type="nucleotide sequence ID" value="NM_001253897.1"/>
</dbReference>
<dbReference type="RefSeq" id="NP_001240827.1">
    <property type="nucleotide sequence ID" value="NM_001253898.1"/>
</dbReference>
<dbReference type="RefSeq" id="NP_036159.1">
    <property type="nucleotide sequence ID" value="NM_012029.2"/>
</dbReference>
<dbReference type="RefSeq" id="XP_006510433.1">
    <property type="nucleotide sequence ID" value="XM_006510370.3"/>
</dbReference>
<dbReference type="RefSeq" id="XP_011240840.1">
    <property type="nucleotide sequence ID" value="XM_011242538.2"/>
</dbReference>
<dbReference type="BioGRID" id="205076">
    <property type="interactions" value="7"/>
</dbReference>
<dbReference type="CORUM" id="Q9QZH6"/>
<dbReference type="DIP" id="DIP-33901N"/>
<dbReference type="FunCoup" id="Q9QZH6">
    <property type="interactions" value="1743"/>
</dbReference>
<dbReference type="IntAct" id="Q9QZH6">
    <property type="interactions" value="16"/>
</dbReference>
<dbReference type="STRING" id="10090.ENSMUSP00000136247"/>
<dbReference type="iPTMnet" id="Q9QZH6"/>
<dbReference type="PhosphoSitePlus" id="Q9QZH6"/>
<dbReference type="jPOST" id="Q9QZH6"/>
<dbReference type="PaxDb" id="10090-ENSMUSP00000137424"/>
<dbReference type="PeptideAtlas" id="Q9QZH6"/>
<dbReference type="ProteomicsDB" id="277544"/>
<dbReference type="Pumba" id="Q9QZH6"/>
<dbReference type="DNASU" id="26940"/>
<dbReference type="GeneID" id="26940"/>
<dbReference type="KEGG" id="mmu:26940"/>
<dbReference type="UCSC" id="uc009ons.2">
    <property type="organism name" value="mouse"/>
</dbReference>
<dbReference type="AGR" id="MGI:1349469"/>
<dbReference type="CTD" id="51295"/>
<dbReference type="MGI" id="MGI:1349469">
    <property type="gene designation" value="Ecsit"/>
</dbReference>
<dbReference type="eggNOG" id="KOG3941">
    <property type="taxonomic scope" value="Eukaryota"/>
</dbReference>
<dbReference type="InParanoid" id="Q9QZH6"/>
<dbReference type="OrthoDB" id="10064298at2759"/>
<dbReference type="PhylomeDB" id="Q9QZH6"/>
<dbReference type="TreeFam" id="TF314943"/>
<dbReference type="Reactome" id="R-MMU-166058">
    <property type="pathway name" value="MyD88:MAL(TIRAP) cascade initiated on plasma membrane"/>
</dbReference>
<dbReference type="Reactome" id="R-MMU-6799198">
    <property type="pathway name" value="Complex I biogenesis"/>
</dbReference>
<dbReference type="Reactome" id="R-MMU-975138">
    <property type="pathway name" value="TRAF6 mediated induction of NFkB and MAP kinases upon TLR7/8 or 9 activation"/>
</dbReference>
<dbReference type="Reactome" id="R-MMU-975871">
    <property type="pathway name" value="MyD88 cascade initiated on plasma membrane"/>
</dbReference>
<dbReference type="BioGRID-ORCS" id="26940">
    <property type="hits" value="17 hits in 78 CRISPR screens"/>
</dbReference>
<dbReference type="ChiTaRS" id="Ecsit">
    <property type="organism name" value="mouse"/>
</dbReference>
<dbReference type="PRO" id="PR:Q9QZH6"/>
<dbReference type="Proteomes" id="UP000000589">
    <property type="component" value="Unplaced"/>
</dbReference>
<dbReference type="RNAct" id="Q9QZH6">
    <property type="molecule type" value="protein"/>
</dbReference>
<dbReference type="GO" id="GO:0005737">
    <property type="term" value="C:cytoplasm"/>
    <property type="evidence" value="ECO:0000250"/>
    <property type="project" value="UniProtKB"/>
</dbReference>
<dbReference type="GO" id="GO:0005739">
    <property type="term" value="C:mitochondrion"/>
    <property type="evidence" value="ECO:0000314"/>
    <property type="project" value="MGI"/>
</dbReference>
<dbReference type="GO" id="GO:0005634">
    <property type="term" value="C:nucleus"/>
    <property type="evidence" value="ECO:0000250"/>
    <property type="project" value="UniProtKB"/>
</dbReference>
<dbReference type="GO" id="GO:0005667">
    <property type="term" value="C:transcription regulator complex"/>
    <property type="evidence" value="ECO:0000314"/>
    <property type="project" value="MGI"/>
</dbReference>
<dbReference type="GO" id="GO:0003682">
    <property type="term" value="F:chromatin binding"/>
    <property type="evidence" value="ECO:0000314"/>
    <property type="project" value="MGI"/>
</dbReference>
<dbReference type="GO" id="GO:0003700">
    <property type="term" value="F:DNA-binding transcription factor activity"/>
    <property type="evidence" value="ECO:0000314"/>
    <property type="project" value="MGI"/>
</dbReference>
<dbReference type="GO" id="GO:0030509">
    <property type="term" value="P:BMP signaling pathway"/>
    <property type="evidence" value="ECO:0000314"/>
    <property type="project" value="MGI"/>
</dbReference>
<dbReference type="GO" id="GO:0007178">
    <property type="term" value="P:cell surface receptor protein serine/threonine kinase signaling pathway"/>
    <property type="evidence" value="ECO:0000314"/>
    <property type="project" value="MGI"/>
</dbReference>
<dbReference type="GO" id="GO:0045087">
    <property type="term" value="P:innate immune response"/>
    <property type="evidence" value="ECO:0007669"/>
    <property type="project" value="UniProtKB-KW"/>
</dbReference>
<dbReference type="GO" id="GO:0001707">
    <property type="term" value="P:mesoderm formation"/>
    <property type="evidence" value="ECO:0000315"/>
    <property type="project" value="MGI"/>
</dbReference>
<dbReference type="GO" id="GO:0051341">
    <property type="term" value="P:regulation of oxidoreductase activity"/>
    <property type="evidence" value="ECO:0000250"/>
    <property type="project" value="UniProtKB"/>
</dbReference>
<dbReference type="GO" id="GO:0061635">
    <property type="term" value="P:regulation of protein complex stability"/>
    <property type="evidence" value="ECO:0000250"/>
    <property type="project" value="UniProtKB"/>
</dbReference>
<dbReference type="GO" id="GO:0006357">
    <property type="term" value="P:regulation of transcription by RNA polymerase II"/>
    <property type="evidence" value="ECO:0000314"/>
    <property type="project" value="MGI"/>
</dbReference>
<dbReference type="InterPro" id="IPR029342">
    <property type="entry name" value="ECIST_C"/>
</dbReference>
<dbReference type="InterPro" id="IPR010418">
    <property type="entry name" value="ECSIT"/>
</dbReference>
<dbReference type="InterPro" id="IPR046448">
    <property type="entry name" value="ECSIT_N"/>
</dbReference>
<dbReference type="PANTHER" id="PTHR13113">
    <property type="entry name" value="ECSIT EVOLUTIONARILY CONSERVED SIGNALING INTERMEDIATE IN TOLL PATHWAYS"/>
    <property type="match status" value="1"/>
</dbReference>
<dbReference type="PANTHER" id="PTHR13113:SF1">
    <property type="entry name" value="EVOLUTIONARILY CONSERVED SIGNALING INTERMEDIATE IN TOLL PATHWAY, MITOCHONDRIAL"/>
    <property type="match status" value="1"/>
</dbReference>
<dbReference type="Pfam" id="PF14784">
    <property type="entry name" value="ECSIT_C"/>
    <property type="match status" value="1"/>
</dbReference>
<dbReference type="Pfam" id="PF06239">
    <property type="entry name" value="ECSIT_N"/>
    <property type="match status" value="1"/>
</dbReference>
<dbReference type="SMART" id="SM01284">
    <property type="entry name" value="ECSIT_Cterm"/>
    <property type="match status" value="1"/>
</dbReference>
<protein>
    <recommendedName>
        <fullName evidence="8">Evolutionarily conserved signaling intermediate in Toll pathway, mitochondrial</fullName>
    </recommendedName>
    <alternativeName>
        <fullName>Protein SITPEC</fullName>
    </alternativeName>
</protein>
<proteinExistence type="evidence at protein level"/>
<comment type="function">
    <text evidence="1 4 5">Adapter protein that plays a role in different signaling pathways including TLRs and IL-1 pathways or innate antiviral induction signaling (PubMed:10465784). Plays a role in the activation of NF-kappa-B by forming a signal complex with TRAF6 and TAK1/MAP3K7 to activate TAK1/MAP3K7 leading to activation of IKKs. Once ubiquitinated, interacts with the dissociated RELA and NFKB1 proteins and translocates to the nucleus where it induces NF-kappa-B-dependent gene expression. Plays a role in innate antiviral immune response by bridging the pattern recognition receptors RIGI and MDA5/IFIT1 to the MAVS complex at the mitochondrion (By similarity). Promotes proteolytic activation of MAP3K1. Involved in the BMP signaling pathway (PubMed:14633973). Required for normal embryonic development (By similarity).</text>
</comment>
<comment type="function">
    <text evidence="7">As part of the MCIA complex, involved in the assembly of the mitochondrial complex I.</text>
</comment>
<comment type="subunit">
    <text evidence="1 4 5 6">Interacts with MAP3K1, SMAD4 and TRAF6. Interacts with SMAD1 only after BMP4-treatment (PubMed:10465784, PubMed:14633973). Part of the mitochondrial complex I assembly/MCIA complex that comprises at least the core subunits TMEM126B, NDUFAF1, ECSIT and ACAD9 and complement subunits such as COA1 and TMEM186. Interacts with NDUFAF1. Interacts with ACAD9. Interacts with TRIM59 (PubMed:22588174). Interacts with TMEM70 and TMEM242 (By similarity). Interacts (when ubiquitinated) with NF-kappa-B subunits RELA and NFKB1 (By similarity). Interacts with RIGI, IFIT1 and MAVS; these interactions promote RLR-mediated type I IFN induction (By similarity). Interacts with SQSTM1; this interaction inhibits TLR4 signaling via functional regulation of the TRAF6-ECSIT complex (By similarity). Interacts with cereblon/CRBN; this interaction inhibits the ubiquitination of ECSIT (By similarity).</text>
</comment>
<comment type="interaction">
    <interactant intactId="EBI-527020">
        <id>Q9QZH6</id>
    </interactant>
    <interactant intactId="EBI-448028">
        <id>P70196</id>
        <label>Traf6</label>
    </interactant>
    <organismsDiffer>false</organismsDiffer>
    <experiments>5</experiments>
</comment>
<comment type="interaction">
    <interactant intactId="EBI-527020">
        <id>Q9QZH6</id>
    </interactant>
    <interactant intactId="EBI-413074">
        <id>P62991</id>
        <label>Ubc</label>
    </interactant>
    <organismsDiffer>false</organismsDiffer>
    <experiments>2</experiments>
</comment>
<comment type="interaction">
    <interactant intactId="EBI-527020">
        <id>Q9QZH6</id>
    </interactant>
    <interactant intactId="EBI-359276">
        <id>Q9Y4K3</id>
        <label>TRAF6</label>
    </interactant>
    <organismsDiffer>true</organismsDiffer>
    <experiments>2</experiments>
</comment>
<comment type="subcellular location">
    <subcellularLocation>
        <location evidence="1">Cytoplasm</location>
    </subcellularLocation>
    <subcellularLocation>
        <location evidence="1">Nucleus</location>
    </subcellularLocation>
    <subcellularLocation>
        <location evidence="1">Mitochondrion</location>
    </subcellularLocation>
</comment>
<comment type="tissue specificity">
    <text evidence="4 5">Detected in heart, brain, lung, liver, skeletal muscle, kidney and testis. Detected in embryonic mesoderm and epiblast, and in extraembryonic ectoderm.</text>
</comment>
<comment type="PTM">
    <text evidence="1">Ubiquitinated on Lys-372; leading to translocation in the nucleus together with RELA and NFKB1 and expression of NF-kappa-B-dependent genes.</text>
</comment>
<comment type="disruption phenotype">
    <text evidence="7">Macrophages lacking ECSIT exhibit profound disruption of mitochondrial complex I/CI. Deletion lead to increased dependence on glycolysis and mitochondrial respiratory chain dysfunction.</text>
</comment>
<comment type="similarity">
    <text evidence="8">Belongs to the ECSIT family.</text>
</comment>
<reference key="1">
    <citation type="journal article" date="1999" name="Genes Dev.">
        <title>ECSIT is an evolutionarily conserved intermediate in the Toll/IL-1 signal transduction pathway.</title>
        <authorList>
            <person name="Kopp E."/>
            <person name="Medzhitov R."/>
            <person name="Carothers J."/>
            <person name="Xiao C."/>
            <person name="Douglas I."/>
            <person name="Janeway C.A."/>
            <person name="Ghosh S."/>
        </authorList>
    </citation>
    <scope>NUCLEOTIDE SEQUENCE [MRNA]</scope>
    <scope>INTERACTION WITH TRAF6 AND MAP3K1</scope>
    <scope>FUNCTION</scope>
    <scope>ALTERNATIVE SPLICING</scope>
    <scope>TISSUE SPECIFICITY</scope>
    <source>
        <tissue>Liver</tissue>
    </source>
</reference>
<reference key="2">
    <citation type="journal article" date="2004" name="Genome Res.">
        <title>The status, quality, and expansion of the NIH full-length cDNA project: the Mammalian Gene Collection (MGC).</title>
        <authorList>
            <consortium name="The MGC Project Team"/>
        </authorList>
    </citation>
    <scope>NUCLEOTIDE SEQUENCE [LARGE SCALE MRNA]</scope>
    <source>
        <strain>Czech II</strain>
        <strain>FVB/N</strain>
        <tissue>Mammary tumor</tissue>
    </source>
</reference>
<reference key="3">
    <citation type="journal article" date="2003" name="Genes Dev.">
        <title>Ecsit is required for Bmp signaling and mesoderm formation during mouse embryogenesis.</title>
        <authorList>
            <person name="Xiao C."/>
            <person name="Shim J.-H."/>
            <person name="Klueppel M."/>
            <person name="Zhang S.S.-M."/>
            <person name="Dong C."/>
            <person name="Flavell R.A."/>
            <person name="Fu X.-Y."/>
            <person name="Wrana J.L."/>
            <person name="Hogan B.L.M."/>
            <person name="Ghosh S."/>
        </authorList>
    </citation>
    <scope>FUNCTION</scope>
    <scope>SUBCELLULAR LOCATION</scope>
    <scope>INTERACTION WITH SMAD1 AND SMAD4</scope>
    <scope>ALTERNATIVE SPLICING</scope>
    <scope>TISSUE SPECIFICITY</scope>
</reference>
<reference key="4">
    <citation type="journal article" date="2010" name="Cell">
        <title>A tissue-specific atlas of mouse protein phosphorylation and expression.</title>
        <authorList>
            <person name="Huttlin E.L."/>
            <person name="Jedrychowski M.P."/>
            <person name="Elias J.E."/>
            <person name="Goswami T."/>
            <person name="Rad R."/>
            <person name="Beausoleil S.A."/>
            <person name="Villen J."/>
            <person name="Haas W."/>
            <person name="Sowa M.E."/>
            <person name="Gygi S.P."/>
        </authorList>
    </citation>
    <scope>IDENTIFICATION BY MASS SPECTROMETRY [LARGE SCALE ANALYSIS]</scope>
    <source>
        <tissue>Brown adipose tissue</tissue>
        <tissue>Heart</tissue>
        <tissue>Kidney</tissue>
        <tissue>Liver</tissue>
        <tissue>Spleen</tissue>
        <tissue>Testis</tissue>
    </source>
</reference>
<reference key="5">
    <citation type="journal article" date="2012" name="Biochem. Biophys. Res. Commun.">
        <title>TRIM59 interacts with ECSIT and negatively regulates NF-kappaB and IRF-3/7-mediated signal pathways.</title>
        <authorList>
            <person name="Kondo T."/>
            <person name="Watanabe M."/>
            <person name="Hatakeyama S."/>
        </authorList>
    </citation>
    <scope>INTERACTION WITH TRIM59</scope>
</reference>
<reference key="6">
    <citation type="journal article" date="2018" name="Cell Rep.">
        <title>An Essential Role for ECSIT in Mitochondrial Complex I Assembly and Mitophagy in Macrophages.</title>
        <authorList>
            <person name="Carneiro F.R.G."/>
            <person name="Lepelley A."/>
            <person name="Seeley J.J."/>
            <person name="Hayden M.S."/>
            <person name="Ghosh S."/>
        </authorList>
    </citation>
    <scope>FUNCTION</scope>
    <scope>DISRUPTION PHENOTYPE</scope>
</reference>
<keyword id="KW-0963">Cytoplasm</keyword>
<keyword id="KW-0391">Immunity</keyword>
<keyword id="KW-0399">Innate immunity</keyword>
<keyword id="KW-1017">Isopeptide bond</keyword>
<keyword id="KW-0496">Mitochondrion</keyword>
<keyword id="KW-0539">Nucleus</keyword>
<keyword id="KW-1185">Reference proteome</keyword>
<keyword id="KW-0809">Transit peptide</keyword>
<keyword id="KW-0832">Ubl conjugation</keyword>
<evidence type="ECO:0000250" key="1">
    <source>
        <dbReference type="UniProtKB" id="Q9BQ95"/>
    </source>
</evidence>
<evidence type="ECO:0000255" key="2"/>
<evidence type="ECO:0000256" key="3">
    <source>
        <dbReference type="SAM" id="MobiDB-lite"/>
    </source>
</evidence>
<evidence type="ECO:0000269" key="4">
    <source>
    </source>
</evidence>
<evidence type="ECO:0000269" key="5">
    <source>
    </source>
</evidence>
<evidence type="ECO:0000269" key="6">
    <source>
    </source>
</evidence>
<evidence type="ECO:0000269" key="7">
    <source>
    </source>
</evidence>
<evidence type="ECO:0000305" key="8"/>
<evidence type="ECO:0000312" key="9">
    <source>
        <dbReference type="MGI" id="MGI:1349469"/>
    </source>
</evidence>
<organism>
    <name type="scientific">Mus musculus</name>
    <name type="common">Mouse</name>
    <dbReference type="NCBI Taxonomy" id="10090"/>
    <lineage>
        <taxon>Eukaryota</taxon>
        <taxon>Metazoa</taxon>
        <taxon>Chordata</taxon>
        <taxon>Craniata</taxon>
        <taxon>Vertebrata</taxon>
        <taxon>Euteleostomi</taxon>
        <taxon>Mammalia</taxon>
        <taxon>Eutheria</taxon>
        <taxon>Euarchontoglires</taxon>
        <taxon>Glires</taxon>
        <taxon>Rodentia</taxon>
        <taxon>Myomorpha</taxon>
        <taxon>Muroidea</taxon>
        <taxon>Muridae</taxon>
        <taxon>Murinae</taxon>
        <taxon>Mus</taxon>
        <taxon>Mus</taxon>
    </lineage>
</organism>